<comment type="function">
    <text evidence="1">Receptor for a number of inflammatory CC-chemokines including CCL3/MIP-1-alpha, CCL4/MIP-1-beta and RANTES and subsequently transduces a signal by increasing the intracellular calcium ion level. May play a role in the control of granulocytic lineage proliferation or differentiation. Participates in T-lymphocyte migration to the infection site by acting as a chemotactic receptor.</text>
</comment>
<comment type="subunit">
    <text evidence="1">Interacts with PRAF2. Efficient ligand binding to CCL3/MIP-1alpha and CCL4/MIP-1beta requires sulfation, O-glycosylation and sialic acid modifications. Glycosylation on Ser-6 is required for efficient binding of CCL4. Interacts with GRK2. Interacts with ARRB1 and ARRB2. Interacts with CNIH4. Interacts with S100A4; this interaction stimulates T-lymphocyte chemotaxis.</text>
</comment>
<comment type="subcellular location">
    <subcellularLocation>
        <location evidence="2">Cell membrane</location>
        <topology evidence="2">Multi-pass membrane protein</topology>
    </subcellularLocation>
</comment>
<comment type="PTM">
    <text evidence="1">Sulfated on at least 2 of the N-terminal tyrosines. Sulfation is required for efficient binding of the chemokines, CCL3 and CCL4 (By similarity).</text>
</comment>
<comment type="PTM">
    <text evidence="1">Palmitoylation in the C-terminal is important for cell surface expression.</text>
</comment>
<comment type="PTM">
    <text evidence="1">Phosphorylation on serine residues in the C-terminal is stimulated by binding CC chemokines especially by APO-RANTES.</text>
</comment>
<comment type="PTM">
    <text evidence="1">O-glycosylated, but not N-glycosylated. Ser-6 appears to be the major site even if Ser-7 may be also O-glycosylated. Also sialylated glycans present which contribute to chemokine binding. Thr-16 and Ser-17 may also be glycosylated and, if so, with small moieties such as a T-antigen.</text>
</comment>
<comment type="similarity">
    <text evidence="4">Belongs to the G-protein coupled receptor 1 family.</text>
</comment>
<sequence length="352" mass="40532">MDYQVSSPTYDIDYYTSEPCQKVNVKQIAARLLPPLYSLVFIFGFVGNILVVLILINCKRLKSMTDIYLLNLAISDLFFLLTVPFWAHYAAAQWDFGNTMCQLLTGLYFIGFFSGIFFIILLTIDRYLAIVHAVFALKARTVTFGVVTSVITWVVAVFASLPGIIFTRSQREGLHYTCSSHFPYSQYQFWKNFQTLKIVILGLVLPLLIMVICYSGILKTLLRCRNEKKRHRAVRLIFTIMIVYFLFWAPYNIVLLLNTFQEFFGLNNCSSSNRLDQAMQVTETLGMTHCCINPIIYAFVGEKFRNYLLVFFQKHIAKRFCKCCSIFQQEAPERASSVYTRSTGEHEISVGL</sequence>
<dbReference type="EMBL" id="AF075448">
    <property type="protein sequence ID" value="AAD19860.1"/>
    <property type="molecule type" value="Genomic_DNA"/>
</dbReference>
<dbReference type="SMR" id="O97882"/>
<dbReference type="GlyCosmos" id="O97882">
    <property type="glycosylation" value="2 sites, No reported glycans"/>
</dbReference>
<dbReference type="GO" id="GO:0005737">
    <property type="term" value="C:cytoplasm"/>
    <property type="evidence" value="ECO:0007669"/>
    <property type="project" value="TreeGrafter"/>
</dbReference>
<dbReference type="GO" id="GO:0009897">
    <property type="term" value="C:external side of plasma membrane"/>
    <property type="evidence" value="ECO:0000250"/>
    <property type="project" value="UniProtKB"/>
</dbReference>
<dbReference type="GO" id="GO:0016493">
    <property type="term" value="F:C-C chemokine receptor activity"/>
    <property type="evidence" value="ECO:0000250"/>
    <property type="project" value="UniProtKB"/>
</dbReference>
<dbReference type="GO" id="GO:0071791">
    <property type="term" value="F:chemokine (C-C motif) ligand 5 binding"/>
    <property type="evidence" value="ECO:0007669"/>
    <property type="project" value="TreeGrafter"/>
</dbReference>
<dbReference type="GO" id="GO:0019722">
    <property type="term" value="P:calcium-mediated signaling"/>
    <property type="evidence" value="ECO:0007669"/>
    <property type="project" value="TreeGrafter"/>
</dbReference>
<dbReference type="GO" id="GO:0060326">
    <property type="term" value="P:cell chemotaxis"/>
    <property type="evidence" value="ECO:0007669"/>
    <property type="project" value="TreeGrafter"/>
</dbReference>
<dbReference type="GO" id="GO:0006955">
    <property type="term" value="P:immune response"/>
    <property type="evidence" value="ECO:0007669"/>
    <property type="project" value="InterPro"/>
</dbReference>
<dbReference type="GO" id="GO:0006954">
    <property type="term" value="P:inflammatory response"/>
    <property type="evidence" value="ECO:0007669"/>
    <property type="project" value="InterPro"/>
</dbReference>
<dbReference type="GO" id="GO:0007204">
    <property type="term" value="P:positive regulation of cytosolic calcium ion concentration"/>
    <property type="evidence" value="ECO:0007669"/>
    <property type="project" value="TreeGrafter"/>
</dbReference>
<dbReference type="CDD" id="cd15184">
    <property type="entry name" value="7tmA_CCR5_CCR2"/>
    <property type="match status" value="1"/>
</dbReference>
<dbReference type="FunFam" id="1.20.1070.10:FF:000026">
    <property type="entry name" value="C-C chemokine receptor type 5"/>
    <property type="match status" value="1"/>
</dbReference>
<dbReference type="Gene3D" id="1.20.1070.10">
    <property type="entry name" value="Rhodopsin 7-helix transmembrane proteins"/>
    <property type="match status" value="1"/>
</dbReference>
<dbReference type="InterPro" id="IPR050119">
    <property type="entry name" value="CCR1-9-like"/>
</dbReference>
<dbReference type="InterPro" id="IPR002240">
    <property type="entry name" value="Chemokine_CCR5"/>
</dbReference>
<dbReference type="InterPro" id="IPR000355">
    <property type="entry name" value="Chemokine_rcpt"/>
</dbReference>
<dbReference type="InterPro" id="IPR000276">
    <property type="entry name" value="GPCR_Rhodpsn"/>
</dbReference>
<dbReference type="InterPro" id="IPR017452">
    <property type="entry name" value="GPCR_Rhodpsn_7TM"/>
</dbReference>
<dbReference type="PANTHER" id="PTHR10489:SF686">
    <property type="entry name" value="C-C CHEMOKINE RECEPTOR TYPE 5"/>
    <property type="match status" value="1"/>
</dbReference>
<dbReference type="PANTHER" id="PTHR10489">
    <property type="entry name" value="CELL ADHESION MOLECULE"/>
    <property type="match status" value="1"/>
</dbReference>
<dbReference type="Pfam" id="PF00001">
    <property type="entry name" value="7tm_1"/>
    <property type="match status" value="1"/>
</dbReference>
<dbReference type="PRINTS" id="PR00657">
    <property type="entry name" value="CCCHEMOKINER"/>
</dbReference>
<dbReference type="PRINTS" id="PR01110">
    <property type="entry name" value="CHEMOKINER5"/>
</dbReference>
<dbReference type="PRINTS" id="PR00237">
    <property type="entry name" value="GPCRRHODOPSN"/>
</dbReference>
<dbReference type="SUPFAM" id="SSF81321">
    <property type="entry name" value="Family A G protein-coupled receptor-like"/>
    <property type="match status" value="1"/>
</dbReference>
<dbReference type="PROSITE" id="PS00237">
    <property type="entry name" value="G_PROTEIN_RECEP_F1_1"/>
    <property type="match status" value="1"/>
</dbReference>
<dbReference type="PROSITE" id="PS50262">
    <property type="entry name" value="G_PROTEIN_RECEP_F1_2"/>
    <property type="match status" value="1"/>
</dbReference>
<gene>
    <name type="primary">CCR5</name>
    <name type="synonym">CMKBR5</name>
</gene>
<reference key="1">
    <citation type="journal article" date="1999" name="Mol. Biol. Evol.">
        <title>Sequence evolution of the CCR5 chemokine receptor gene in primates.</title>
        <authorList>
            <person name="Zhang Y.-W."/>
            <person name="Ryder O.A."/>
            <person name="Zhang Y.-P."/>
        </authorList>
    </citation>
    <scope>NUCLEOTIDE SEQUENCE [GENOMIC DNA]</scope>
</reference>
<accession>O97882</accession>
<name>CCR5_PYGNE</name>
<organism>
    <name type="scientific">Pygathrix nemaeus</name>
    <name type="common">Red-shanked douc langur</name>
    <dbReference type="NCBI Taxonomy" id="54133"/>
    <lineage>
        <taxon>Eukaryota</taxon>
        <taxon>Metazoa</taxon>
        <taxon>Chordata</taxon>
        <taxon>Craniata</taxon>
        <taxon>Vertebrata</taxon>
        <taxon>Euteleostomi</taxon>
        <taxon>Mammalia</taxon>
        <taxon>Eutheria</taxon>
        <taxon>Euarchontoglires</taxon>
        <taxon>Primates</taxon>
        <taxon>Haplorrhini</taxon>
        <taxon>Catarrhini</taxon>
        <taxon>Cercopithecidae</taxon>
        <taxon>Colobinae</taxon>
        <taxon>Pygathrix</taxon>
    </lineage>
</organism>
<keyword id="KW-1003">Cell membrane</keyword>
<keyword id="KW-1015">Disulfide bond</keyword>
<keyword id="KW-0297">G-protein coupled receptor</keyword>
<keyword id="KW-0325">Glycoprotein</keyword>
<keyword id="KW-0449">Lipoprotein</keyword>
<keyword id="KW-0472">Membrane</keyword>
<keyword id="KW-0564">Palmitate</keyword>
<keyword id="KW-0597">Phosphoprotein</keyword>
<keyword id="KW-0675">Receptor</keyword>
<keyword id="KW-0765">Sulfation</keyword>
<keyword id="KW-0807">Transducer</keyword>
<keyword id="KW-0812">Transmembrane</keyword>
<keyword id="KW-1133">Transmembrane helix</keyword>
<proteinExistence type="inferred from homology"/>
<feature type="chain" id="PRO_0000069279" description="C-C chemokine receptor type 5">
    <location>
        <begin position="1"/>
        <end position="352"/>
    </location>
</feature>
<feature type="topological domain" description="Extracellular" evidence="3">
    <location>
        <begin position="1"/>
        <end position="30"/>
    </location>
</feature>
<feature type="transmembrane region" description="Helical; Name=1" evidence="3">
    <location>
        <begin position="31"/>
        <end position="58"/>
    </location>
</feature>
<feature type="topological domain" description="Cytoplasmic" evidence="3">
    <location>
        <begin position="59"/>
        <end position="68"/>
    </location>
</feature>
<feature type="transmembrane region" description="Helical; Name=2" evidence="3">
    <location>
        <begin position="69"/>
        <end position="89"/>
    </location>
</feature>
<feature type="topological domain" description="Extracellular" evidence="3">
    <location>
        <begin position="90"/>
        <end position="102"/>
    </location>
</feature>
<feature type="transmembrane region" description="Helical; Name=3" evidence="3">
    <location>
        <begin position="103"/>
        <end position="124"/>
    </location>
</feature>
<feature type="topological domain" description="Cytoplasmic" evidence="3">
    <location>
        <begin position="125"/>
        <end position="141"/>
    </location>
</feature>
<feature type="transmembrane region" description="Helical; Name=4" evidence="3">
    <location>
        <begin position="142"/>
        <end position="166"/>
    </location>
</feature>
<feature type="topological domain" description="Extracellular" evidence="3">
    <location>
        <begin position="167"/>
        <end position="198"/>
    </location>
</feature>
<feature type="transmembrane region" description="Helical; Name=5" evidence="3">
    <location>
        <begin position="199"/>
        <end position="218"/>
    </location>
</feature>
<feature type="topological domain" description="Cytoplasmic" evidence="3">
    <location>
        <begin position="219"/>
        <end position="235"/>
    </location>
</feature>
<feature type="transmembrane region" description="Helical; Name=6" evidence="3">
    <location>
        <begin position="236"/>
        <end position="260"/>
    </location>
</feature>
<feature type="topological domain" description="Extracellular" evidence="3">
    <location>
        <begin position="261"/>
        <end position="277"/>
    </location>
</feature>
<feature type="transmembrane region" description="Helical; Name=7" evidence="3">
    <location>
        <begin position="278"/>
        <end position="301"/>
    </location>
</feature>
<feature type="topological domain" description="Cytoplasmic" evidence="3">
    <location>
        <begin position="302"/>
        <end position="352"/>
    </location>
</feature>
<feature type="modified residue" description="Sulfotyrosine" evidence="1">
    <location>
        <position position="3"/>
    </location>
</feature>
<feature type="modified residue" description="Sulfotyrosine" evidence="3">
    <location>
        <position position="10"/>
    </location>
</feature>
<feature type="modified residue" description="Sulfotyrosine" evidence="3">
    <location>
        <position position="14"/>
    </location>
</feature>
<feature type="modified residue" description="Sulfotyrosine" evidence="3">
    <location>
        <position position="15"/>
    </location>
</feature>
<feature type="modified residue" description="Phosphoserine; by BARK1" evidence="1">
    <location>
        <position position="336"/>
    </location>
</feature>
<feature type="modified residue" description="Phosphoserine; by BARK1" evidence="1">
    <location>
        <position position="337"/>
    </location>
</feature>
<feature type="modified residue" description="Phosphoserine; by BARK1" evidence="1">
    <location>
        <position position="342"/>
    </location>
</feature>
<feature type="modified residue" description="Phosphoserine; by BARK1" evidence="1">
    <location>
        <position position="349"/>
    </location>
</feature>
<feature type="lipid moiety-binding region" description="S-palmitoyl cysteine" evidence="1">
    <location>
        <position position="321"/>
    </location>
</feature>
<feature type="lipid moiety-binding region" description="S-palmitoyl cysteine" evidence="1">
    <location>
        <position position="323"/>
    </location>
</feature>
<feature type="lipid moiety-binding region" description="S-palmitoyl cysteine" evidence="1">
    <location>
        <position position="324"/>
    </location>
</feature>
<feature type="glycosylation site" description="O-linked (GalNAc...) serine" evidence="1">
    <location>
        <position position="6"/>
    </location>
</feature>
<feature type="glycosylation site" description="O-linked (GalNAc...) serine" evidence="1">
    <location>
        <position position="7"/>
    </location>
</feature>
<feature type="disulfide bond" evidence="1">
    <location>
        <begin position="20"/>
        <end position="269"/>
    </location>
</feature>
<feature type="disulfide bond" evidence="4">
    <location>
        <begin position="101"/>
        <end position="178"/>
    </location>
</feature>
<evidence type="ECO:0000250" key="1">
    <source>
        <dbReference type="UniProtKB" id="P51681"/>
    </source>
</evidence>
<evidence type="ECO:0000250" key="2">
    <source>
        <dbReference type="UniProtKB" id="Q9XT76"/>
    </source>
</evidence>
<evidence type="ECO:0000255" key="3"/>
<evidence type="ECO:0000255" key="4">
    <source>
        <dbReference type="PROSITE-ProRule" id="PRU00521"/>
    </source>
</evidence>
<protein>
    <recommendedName>
        <fullName>C-C chemokine receptor type 5</fullName>
        <shortName>C-C CKR-5</shortName>
        <shortName>CC-CKR-5</shortName>
        <shortName>CCR-5</shortName>
        <shortName>CCR5</shortName>
    </recommendedName>
    <cdAntigenName>CD195</cdAntigenName>
</protein>